<sequence>MASLKMLICVCVAILIPSTLSQDSHGIAGIIDPRDTASMDVGKISFSEAIGSGAPKEPQIRNRIFACSSPTGASVARLAQPRHCHRHADSTNMTEGIAVVFKQNIAPYVFNVTLYYKHITTVTTWALFSRPQITNEYVTRVPIDYHEIVRIDRSGECSSKATYHKNFMFFEAYDNDEAEKKLPLVPSLLRSTVSKAFHTTNFTKRHQTLGYRTSTSVDCVVEYLQARSVYPYDYFGMATGDTVEISPFYTKNTTGPRRHSVYRDYRFLEIANYQVRDLETGQIRPPKKRNFLTDEQFTIGWDAMEEKESVCTLSKWIEVPEAVRVSYKNSYHFSLKDMTMTFSSGKQPFNISRLHLAECVPTIATEAIDGIFARKYSSTHVRSGDIEYYLGSGGFLIAFQKLMSHGLAEMYLEEAQRQNHLPRGRERRQAAGRRTASLQSGPQGDRITTHSSATFAMLQFAYDKIQAHVNELIGNLLEAWCELQNRQLIVWHEMKKLNPNSLMTSLFGQPVSARLLGDIVAVSKCIEIPIENIRMQDSMRMPGDPTMCYTRPVLIFRYSSSPESQFSANSTENHNLDILGQLGEHNEILQGRNLIEPCMINHRRYFLLGENYLLYEDYTFVRQVNASEIEEVSIFINLNATILEDLDFVPVEVYTREELRDTGTLNYDDVVRYQNIYNKRFRDIDTVIRGDRGDAIFRAIADFFGNTLGEVGKALGTVVMTAAAAVISTVSGIASFLSNPFAALGIGIAVVVSIILGLLAFKYVMNLKSNPVQVLFPGAVPPAGTPPRPSRRYYKDEEEVEEDSDEDDRILATRVLKGLELLHKDEQKARRQKARFSAFAKNMRNLFRRKPRTKEDDYPLLEYPSWAEESEDE</sequence>
<dbReference type="EMBL" id="X56093">
    <property type="protein sequence ID" value="CAA39573.1"/>
    <property type="molecule type" value="Genomic_DNA"/>
</dbReference>
<dbReference type="PIR" id="S26690">
    <property type="entry name" value="S26690"/>
</dbReference>
<dbReference type="SMR" id="Q02409"/>
<dbReference type="GlyCosmos" id="Q02409">
    <property type="glycosylation" value="8 sites, No reported glycans"/>
</dbReference>
<dbReference type="GO" id="GO:0044175">
    <property type="term" value="C:host cell endosome membrane"/>
    <property type="evidence" value="ECO:0007669"/>
    <property type="project" value="UniProtKB-SubCell"/>
</dbReference>
<dbReference type="GO" id="GO:0044178">
    <property type="term" value="C:host cell Golgi membrane"/>
    <property type="evidence" value="ECO:0007669"/>
    <property type="project" value="UniProtKB-SubCell"/>
</dbReference>
<dbReference type="GO" id="GO:0020002">
    <property type="term" value="C:host cell plasma membrane"/>
    <property type="evidence" value="ECO:0007669"/>
    <property type="project" value="UniProtKB-SubCell"/>
</dbReference>
<dbReference type="GO" id="GO:0016020">
    <property type="term" value="C:membrane"/>
    <property type="evidence" value="ECO:0007669"/>
    <property type="project" value="UniProtKB-KW"/>
</dbReference>
<dbReference type="GO" id="GO:0019031">
    <property type="term" value="C:viral envelope"/>
    <property type="evidence" value="ECO:0007669"/>
    <property type="project" value="UniProtKB-KW"/>
</dbReference>
<dbReference type="GO" id="GO:0055036">
    <property type="term" value="C:virion membrane"/>
    <property type="evidence" value="ECO:0007669"/>
    <property type="project" value="UniProtKB-SubCell"/>
</dbReference>
<dbReference type="GO" id="GO:0046718">
    <property type="term" value="P:symbiont entry into host cell"/>
    <property type="evidence" value="ECO:0007669"/>
    <property type="project" value="UniProtKB-KW"/>
</dbReference>
<dbReference type="GO" id="GO:0019062">
    <property type="term" value="P:virion attachment to host cell"/>
    <property type="evidence" value="ECO:0007669"/>
    <property type="project" value="UniProtKB-KW"/>
</dbReference>
<dbReference type="Gene3D" id="1.20.5.1890">
    <property type="match status" value="1"/>
</dbReference>
<dbReference type="Gene3D" id="2.30.29.100">
    <property type="match status" value="1"/>
</dbReference>
<dbReference type="Gene3D" id="2.30.30.1230">
    <property type="match status" value="1"/>
</dbReference>
<dbReference type="Gene3D" id="6.10.250.3280">
    <property type="match status" value="1"/>
</dbReference>
<dbReference type="HAMAP" id="MF_04032">
    <property type="entry name" value="HSV_GB"/>
    <property type="match status" value="1"/>
</dbReference>
<dbReference type="InterPro" id="IPR035377">
    <property type="entry name" value="Glycoprot_B_PH1"/>
</dbReference>
<dbReference type="InterPro" id="IPR035381">
    <property type="entry name" value="Glycoprot_B_PH2"/>
</dbReference>
<dbReference type="InterPro" id="IPR038631">
    <property type="entry name" value="Glycoprot_B_PH2_sf"/>
</dbReference>
<dbReference type="InterPro" id="IPR055341">
    <property type="entry name" value="Glycoprotein_B_ecto_C"/>
</dbReference>
<dbReference type="InterPro" id="IPR000234">
    <property type="entry name" value="Herpes_Glycoprot_B"/>
</dbReference>
<dbReference type="Pfam" id="PF17416">
    <property type="entry name" value="Glycoprot_B_PH1"/>
    <property type="match status" value="1"/>
</dbReference>
<dbReference type="Pfam" id="PF17417">
    <property type="entry name" value="Glycoprot_B_PH2"/>
    <property type="match status" value="1"/>
</dbReference>
<dbReference type="Pfam" id="PF00606">
    <property type="entry name" value="Glycoprotein_B"/>
    <property type="match status" value="1"/>
</dbReference>
<dbReference type="SUPFAM" id="SSF161008">
    <property type="entry name" value="Viral glycoprotein ectodomain-like"/>
    <property type="match status" value="1"/>
</dbReference>
<evidence type="ECO:0000255" key="1">
    <source>
        <dbReference type="HAMAP-Rule" id="MF_04032"/>
    </source>
</evidence>
<evidence type="ECO:0000256" key="2">
    <source>
        <dbReference type="SAM" id="MobiDB-lite"/>
    </source>
</evidence>
<evidence type="ECO:0000305" key="3"/>
<accession>Q02409</accession>
<gene>
    <name evidence="1" type="primary">gB</name>
</gene>
<proteinExistence type="inferred from homology"/>
<organism>
    <name type="scientific">Infectious laryngotracheitis virus (strain 632)</name>
    <name type="common">ILTV</name>
    <name type="synonym">Gallid herpesvirus 1</name>
    <dbReference type="NCBI Taxonomy" id="31521"/>
    <lineage>
        <taxon>Viruses</taxon>
        <taxon>Duplodnaviria</taxon>
        <taxon>Heunggongvirae</taxon>
        <taxon>Peploviricota</taxon>
        <taxon>Herviviricetes</taxon>
        <taxon>Herpesvirales</taxon>
        <taxon>Orthoherpesviridae</taxon>
        <taxon>Alphaherpesvirinae</taxon>
        <taxon>Iltovirus</taxon>
        <taxon>Iltovirus gallidalpha1</taxon>
        <taxon>Infectious laryngotracheitis virus</taxon>
    </lineage>
</organism>
<name>GB_ILTV6</name>
<keyword id="KW-1015">Disulfide bond</keyword>
<keyword id="KW-0325">Glycoprotein</keyword>
<keyword id="KW-1032">Host cell membrane</keyword>
<keyword id="KW-1039">Host endosome</keyword>
<keyword id="KW-1040">Host Golgi apparatus</keyword>
<keyword id="KW-1043">Host membrane</keyword>
<keyword id="KW-0945">Host-virus interaction</keyword>
<keyword id="KW-0472">Membrane</keyword>
<keyword id="KW-0732">Signal</keyword>
<keyword id="KW-0812">Transmembrane</keyword>
<keyword id="KW-1133">Transmembrane helix</keyword>
<keyword id="KW-1161">Viral attachment to host cell</keyword>
<keyword id="KW-0261">Viral envelope protein</keyword>
<keyword id="KW-0946">Virion</keyword>
<keyword id="KW-1160">Virus entry into host cell</keyword>
<protein>
    <recommendedName>
        <fullName evidence="1">Envelope glycoprotein B</fullName>
        <shortName evidence="1">gB</shortName>
    </recommendedName>
</protein>
<feature type="signal peptide" evidence="1">
    <location>
        <begin position="1"/>
        <end position="21"/>
    </location>
</feature>
<feature type="chain" id="PRO_0000038177" description="Envelope glycoprotein B" evidence="1">
    <location>
        <begin position="22"/>
        <end position="873"/>
    </location>
</feature>
<feature type="topological domain" description="Virion surface" evidence="1">
    <location>
        <begin position="22"/>
        <end position="740"/>
    </location>
</feature>
<feature type="transmembrane region" description="Helical" evidence="1">
    <location>
        <begin position="741"/>
        <end position="761"/>
    </location>
</feature>
<feature type="topological domain" description="Intravirion" evidence="1">
    <location>
        <begin position="762"/>
        <end position="873"/>
    </location>
</feature>
<feature type="region of interest" description="Involved in fusion and/or binding to host membrane" evidence="1">
    <location>
        <begin position="124"/>
        <end position="130"/>
    </location>
</feature>
<feature type="region of interest" description="Involved in fusion and/or binding to host membrane" evidence="1">
    <location>
        <begin position="206"/>
        <end position="213"/>
    </location>
</feature>
<feature type="region of interest" description="Disordered" evidence="2">
    <location>
        <begin position="418"/>
        <end position="447"/>
    </location>
</feature>
<feature type="region of interest" description="Hydrophobic membrane proximal region" evidence="1">
    <location>
        <begin position="684"/>
        <end position="738"/>
    </location>
</feature>
<feature type="region of interest" description="Hydrophobic membrane proximal region">
    <location>
        <begin position="715"/>
        <end position="734"/>
    </location>
</feature>
<feature type="region of interest" description="Disordered" evidence="2">
    <location>
        <begin position="781"/>
        <end position="807"/>
    </location>
</feature>
<feature type="short sequence motif" description="Internalization motif" evidence="1">
    <location>
        <begin position="858"/>
        <end position="861"/>
    </location>
</feature>
<feature type="compositionally biased region" description="Acidic residues" evidence="2">
    <location>
        <begin position="796"/>
        <end position="807"/>
    </location>
</feature>
<feature type="glycosylation site" description="N-linked (GlcNAc...) asparagine; by host" evidence="1">
    <location>
        <position position="92"/>
    </location>
</feature>
<feature type="glycosylation site" description="N-linked (GlcNAc...) asparagine; by host" evidence="1">
    <location>
        <position position="111"/>
    </location>
</feature>
<feature type="glycosylation site" description="N-linked (GlcNAc...) asparagine; by host" evidence="1">
    <location>
        <position position="201"/>
    </location>
</feature>
<feature type="glycosylation site" description="N-linked (GlcNAc...) asparagine; by host" evidence="1">
    <location>
        <position position="252"/>
    </location>
</feature>
<feature type="glycosylation site" description="N-linked (GlcNAc...) asparagine; by host" evidence="1">
    <location>
        <position position="350"/>
    </location>
</feature>
<feature type="glycosylation site" description="N-linked (GlcNAc...) asparagine; by host" evidence="1">
    <location>
        <position position="569"/>
    </location>
</feature>
<feature type="glycosylation site" description="N-linked (GlcNAc...) asparagine; by host" evidence="1">
    <location>
        <position position="625"/>
    </location>
</feature>
<feature type="glycosylation site" description="N-linked (GlcNAc...) asparagine; by host" evidence="1">
    <location>
        <position position="639"/>
    </location>
</feature>
<feature type="disulfide bond" evidence="1">
    <location>
        <begin position="67"/>
        <end position="525"/>
    </location>
</feature>
<feature type="disulfide bond" evidence="1">
    <location>
        <begin position="84"/>
        <end position="481"/>
    </location>
</feature>
<feature type="disulfide bond" evidence="1">
    <location>
        <begin position="157"/>
        <end position="219"/>
    </location>
</feature>
<feature type="disulfide bond" evidence="1">
    <location>
        <begin position="311"/>
        <end position="359"/>
    </location>
</feature>
<feature type="disulfide bond" evidence="1">
    <location>
        <begin position="548"/>
        <end position="598"/>
    </location>
</feature>
<comment type="function">
    <text evidence="1">Envelope glycoprotein that forms spikes at the surface of virion envelope. Essential for the initial attachment to heparan sulfate moieties of the host cell surface proteoglycans. Involved in fusion of viral and cellular membranes leading to virus entry into the host cell. Following initial binding to its host receptors, membrane fusion is mediated by the fusion machinery composed at least of gB and the heterodimer gH/gL. May be involved in the fusion between the virion envelope and the outer nuclear membrane during virion egress.</text>
</comment>
<comment type="subunit">
    <text evidence="1">Homotrimer; disulfide-linked. Binds to heparan sulfate proteoglycans. Interacts with gH/gL heterodimer.</text>
</comment>
<comment type="subcellular location">
    <subcellularLocation>
        <location evidence="1">Virion membrane</location>
        <topology evidence="1">Single-pass type I membrane protein</topology>
    </subcellularLocation>
    <subcellularLocation>
        <location evidence="1">Host cell membrane</location>
        <topology evidence="1">Single-pass type I membrane protein</topology>
    </subcellularLocation>
    <subcellularLocation>
        <location evidence="1">Host endosome membrane</location>
        <topology evidence="1">Single-pass type I membrane protein</topology>
    </subcellularLocation>
    <subcellularLocation>
        <location evidence="1">Host Golgi apparatus membrane</location>
        <topology evidence="1">Single-pass type I membrane protein</topology>
    </subcellularLocation>
    <text evidence="1">During virion morphogenesis, this protein probably accumulates in the endosomes and trans-Golgi where secondary envelopment occurs. It is probably transported to the cell surface from where it is endocytosed and directed to the trans-Golgi network (TGN).</text>
</comment>
<comment type="PTM">
    <text evidence="3">A proteolytic cleavage by host furin generates two subunits that remain linked by disulfide bonds.</text>
</comment>
<comment type="similarity">
    <text evidence="1">Belongs to the herpesviridae glycoprotein B family.</text>
</comment>
<organismHost>
    <name type="scientific">Gallus gallus</name>
    <name type="common">Chicken</name>
    <dbReference type="NCBI Taxonomy" id="9031"/>
</organismHost>
<reference key="1">
    <citation type="journal article" date="1991" name="Virus Genes">
        <title>Identification of the infectious laryngotracheitis virus glycoprotein gB gene by the polymerase chain reaction.</title>
        <authorList>
            <person name="Poulsen D.J."/>
            <person name="Adams Burton C.R."/>
            <person name="O'Brian J.J."/>
            <person name="Rabin S.J."/>
            <person name="Keeler C.L. Jr."/>
        </authorList>
    </citation>
    <scope>NUCLEOTIDE SEQUENCE [GENOMIC DNA]</scope>
</reference>
<reference key="2">
    <citation type="submission" date="1994-02" db="EMBL/GenBank/DDBJ databases">
        <authorList>
            <person name="Keeler C.L. Jr."/>
        </authorList>
    </citation>
    <scope>SEQUENCE REVISION</scope>
</reference>